<accession>Q94BT6</accession>
<accession>Q9LDF6</accession>
<name>ADO1_ARATH</name>
<sequence>MEWDSGSDLSADDASSLADDEEGGLFPGGGPIPYPVGNLLHTAPCGFVVTDAVEPDQPIIYVNTVFEMVTGYRAEEVLGGNCRFLQCRGPFAKRRHPLVDSMVVSEIRKCIDEGIEFQGELLNFRKDGSPLMNRLRLTPIYGDDDTITHIIGIQFFIETDIDLGPVLGSSTKEKSIDGIYSALAAGERNVSRGMCGLFQLSDEVVSMKILSRLTPRDVASVSSVCRRLYVLTKNEDLWRRVCQNAWGSETTRVLETVPGAKRLGWGRLARELTTLEAAAWRKLSVGGSVEPSRCNFSACAVGNRVVLFGGEGVNMQPMNDTFVLDLNSDYPEWQHVKVSSPPPGRWGHTLTCVNGSNLVVFGGCGQQGLLNDVFVLNLDAKPPTWREISGLAPPLPRSWHSSCTLDGTKLIVSGGCADSGVLLSDTFLLDLSIEKPVWREIPAAWTPPSRLGHTLSVYGGRKILMFGGLAKSGPLKFRSSDVFTMDLSEEEPCWRCVTGSGMPGAGNPGGVAPPPRLDHVAVNLPGGRILIFGGSVAGLHSASQLYLLDPTEDKPTWRILNIPGRPPRFAWGHGTCVVGGTRAIVLGGQTGEEWMLSELHELSLASYLT</sequence>
<reference key="1">
    <citation type="journal article" date="2000" name="Cell">
        <title>ZEITLUPE encodes a novel clock-associated PAS protein from Arabidopsis.</title>
        <authorList>
            <person name="Somers D.E."/>
            <person name="Schultz T.F."/>
            <person name="Milnamow M."/>
            <person name="Kay S.A."/>
        </authorList>
    </citation>
    <scope>NUCLEOTIDE SEQUENCE [MRNA]</scope>
    <scope>FUNCTION</scope>
    <scope>INDUCTION</scope>
    <scope>MUTAGENESIS OF ASP-320 AND ASP-425</scope>
</reference>
<reference key="2">
    <citation type="journal article" date="2000" name="Cell">
        <title>FKF1, a clock-controlled gene that regulates the transition to flowering in Arabidopsis.</title>
        <authorList>
            <person name="Nelson D.C."/>
            <person name="Lasswell J.E."/>
            <person name="Rogg L.E."/>
            <person name="Cohen M.A."/>
            <person name="Bartel B."/>
        </authorList>
    </citation>
    <scope>NUCLEOTIDE SEQUENCE [MRNA]</scope>
    <scope>FUNCTION</scope>
    <scope>TISSUE SPECIFICITY</scope>
</reference>
<reference key="3">
    <citation type="journal article" date="2000" name="Plant J.">
        <title>LKP1 (LOV kelch protein 1): a factor involved in the regulation of flowering time in Arabidopsis.</title>
        <authorList>
            <person name="Kiyosue T."/>
            <person name="Wada M."/>
        </authorList>
    </citation>
    <scope>NUCLEOTIDE SEQUENCE [MRNA]</scope>
    <scope>FUNCTION</scope>
    <scope>TISSUE SPECIFICITY</scope>
    <scope>SUBCELLULAR LOCATION</scope>
    <scope>INDUCTION</scope>
</reference>
<reference key="4">
    <citation type="journal article" date="2001" name="Nature">
        <title>An Arabidopsis circadian clock component interacts with both CRY1 and phyB.</title>
        <authorList>
            <person name="Jarillo J.A."/>
            <person name="Capel J."/>
            <person name="Tang R.-H."/>
            <person name="Yang H.-Q."/>
            <person name="Alonso J.M."/>
            <person name="Ecker J.R."/>
            <person name="Cashmore A.R."/>
        </authorList>
    </citation>
    <scope>NUCLEOTIDE SEQUENCE [MRNA]</scope>
    <scope>FUNCTION</scope>
    <scope>INTERACTION WITH CRY1 AND PHYB</scope>
</reference>
<reference key="5">
    <citation type="journal article" date="1998" name="DNA Res.">
        <title>Structural analysis of Arabidopsis thaliana chromosome 5. VIII. Sequence features of the regions of 1,081,958 bp covered by seventeen physically assigned P1 and TAC clones.</title>
        <authorList>
            <person name="Asamizu E."/>
            <person name="Sato S."/>
            <person name="Kaneko T."/>
            <person name="Nakamura Y."/>
            <person name="Kotani H."/>
            <person name="Miyajima N."/>
            <person name="Tabata S."/>
        </authorList>
    </citation>
    <scope>NUCLEOTIDE SEQUENCE [LARGE SCALE GENOMIC DNA]</scope>
    <source>
        <strain>cv. Columbia</strain>
    </source>
</reference>
<reference key="6">
    <citation type="journal article" date="2017" name="Plant J.">
        <title>Araport11: a complete reannotation of the Arabidopsis thaliana reference genome.</title>
        <authorList>
            <person name="Cheng C.Y."/>
            <person name="Krishnakumar V."/>
            <person name="Chan A.P."/>
            <person name="Thibaud-Nissen F."/>
            <person name="Schobel S."/>
            <person name="Town C.D."/>
        </authorList>
    </citation>
    <scope>GENOME REANNOTATION</scope>
    <source>
        <strain>cv. Columbia</strain>
    </source>
</reference>
<reference key="7">
    <citation type="journal article" date="2003" name="Science">
        <title>Empirical analysis of transcriptional activity in the Arabidopsis genome.</title>
        <authorList>
            <person name="Yamada K."/>
            <person name="Lim J."/>
            <person name="Dale J.M."/>
            <person name="Chen H."/>
            <person name="Shinn P."/>
            <person name="Palm C.J."/>
            <person name="Southwick A.M."/>
            <person name="Wu H.C."/>
            <person name="Kim C.J."/>
            <person name="Nguyen M."/>
            <person name="Pham P.K."/>
            <person name="Cheuk R.F."/>
            <person name="Karlin-Newmann G."/>
            <person name="Liu S.X."/>
            <person name="Lam B."/>
            <person name="Sakano H."/>
            <person name="Wu T."/>
            <person name="Yu G."/>
            <person name="Miranda M."/>
            <person name="Quach H.L."/>
            <person name="Tripp M."/>
            <person name="Chang C.H."/>
            <person name="Lee J.M."/>
            <person name="Toriumi M.J."/>
            <person name="Chan M.M."/>
            <person name="Tang C.C."/>
            <person name="Onodera C.S."/>
            <person name="Deng J.M."/>
            <person name="Akiyama K."/>
            <person name="Ansari Y."/>
            <person name="Arakawa T."/>
            <person name="Banh J."/>
            <person name="Banno F."/>
            <person name="Bowser L."/>
            <person name="Brooks S.Y."/>
            <person name="Carninci P."/>
            <person name="Chao Q."/>
            <person name="Choy N."/>
            <person name="Enju A."/>
            <person name="Goldsmith A.D."/>
            <person name="Gurjal M."/>
            <person name="Hansen N.F."/>
            <person name="Hayashizaki Y."/>
            <person name="Johnson-Hopson C."/>
            <person name="Hsuan V.W."/>
            <person name="Iida K."/>
            <person name="Karnes M."/>
            <person name="Khan S."/>
            <person name="Koesema E."/>
            <person name="Ishida J."/>
            <person name="Jiang P.X."/>
            <person name="Jones T."/>
            <person name="Kawai J."/>
            <person name="Kamiya A."/>
            <person name="Meyers C."/>
            <person name="Nakajima M."/>
            <person name="Narusaka M."/>
            <person name="Seki M."/>
            <person name="Sakurai T."/>
            <person name="Satou M."/>
            <person name="Tamse R."/>
            <person name="Vaysberg M."/>
            <person name="Wallender E.K."/>
            <person name="Wong C."/>
            <person name="Yamamura Y."/>
            <person name="Yuan S."/>
            <person name="Shinozaki K."/>
            <person name="Davis R.W."/>
            <person name="Theologis A."/>
            <person name="Ecker J.R."/>
        </authorList>
    </citation>
    <scope>NUCLEOTIDE SEQUENCE [LARGE SCALE MRNA]</scope>
    <source>
        <strain>cv. Columbia</strain>
    </source>
</reference>
<reference key="8">
    <citation type="journal article" date="2000" name="Trends Plant Sci.">
        <title>F-box proteins in Arabidopsis.</title>
        <authorList>
            <person name="Xiao W."/>
            <person name="Jang J.-C."/>
        </authorList>
    </citation>
    <scope>GENE FAMILY</scope>
    <scope>NOMENCLATURE</scope>
</reference>
<reference key="9">
    <citation type="journal article" date="2003" name="Plant J.">
        <title>Protein interaction analysis of SCF ubiquitin E3 ligase subunits from Arabidopsis.</title>
        <authorList>
            <person name="Risseeuw E.P."/>
            <person name="Daskalchuk T.E."/>
            <person name="Banks T.W."/>
            <person name="Liu E."/>
            <person name="Cotelesage J."/>
            <person name="Hellmann H."/>
            <person name="Estelle M."/>
            <person name="Somers D.E."/>
            <person name="Crosby W.L."/>
        </authorList>
    </citation>
    <scope>INTERACTION WITH SKP1A; SKP1B; SKP1D; SKP1K AND SKP1S</scope>
</reference>
<reference key="10">
    <citation type="journal article" date="2003" name="Proc. Natl. Acad. Sci. U.S.A.">
        <title>Circadian phase-specific degradation of the F-box protein ZTL is mediated by the proteasome.</title>
        <authorList>
            <person name="Kim W.-Y."/>
            <person name="Geng R."/>
            <person name="Somers D.E."/>
        </authorList>
    </citation>
    <scope>INDUCTION</scope>
</reference>
<reference key="11">
    <citation type="journal article" date="2004" name="J. Exp. Bot.">
        <title>Identification of ASK and clock-associated proteins as molecular partners of LKP2 (LOV kelch protein 2) in Arabidopsis.</title>
        <authorList>
            <person name="Yasuhara M."/>
            <person name="Mitsui S."/>
            <person name="Hirano H."/>
            <person name="Takanabe R."/>
            <person name="Tokioka Y."/>
            <person name="Ihara N."/>
            <person name="Komatsu A."/>
            <person name="Seki M."/>
            <person name="Shinozaki K."/>
            <person name="Kiyosue T."/>
        </authorList>
    </citation>
    <scope>INTERACTION WITH SKP1A; SKP1B; SKP1D; SKP1K; SKP1N; ADO2; APRR1 AND APRR5</scope>
</reference>
<reference key="12">
    <citation type="journal article" date="2004" name="Plant Cell">
        <title>The F-box protein ZEITLUPE confers dosage-dependent control on the circadian clock, photomorphogenesis, and flowering time.</title>
        <authorList>
            <person name="Somers D.E."/>
            <person name="Kim W.-Y."/>
            <person name="Geng R."/>
        </authorList>
    </citation>
    <scope>FUNCTION</scope>
</reference>
<reference key="13">
    <citation type="journal article" date="2004" name="Plant J.">
        <title>Formation of an SCF(ZTL) complex is required for proper regulation of circadian timing.</title>
        <authorList>
            <person name="Han L."/>
            <person name="Mason M."/>
            <person name="Risseeuw E.P."/>
            <person name="Crosby W.L."/>
            <person name="Somers D.E."/>
        </authorList>
    </citation>
    <scope>FUNCTION</scope>
    <scope>MUTAGENESIS OF LEU-200 AND LEU-213</scope>
    <scope>IDENTIFICATION IN A SCF(ADO1) COMPLEX</scope>
</reference>
<reference key="14">
    <citation type="journal article" date="2006" name="Plant Physiol.">
        <title>Forward genetic analysis of the circadian clock separates the multiple functions of ZEITLUPE.</title>
        <authorList>
            <person name="Kevei E."/>
            <person name="Gyula P."/>
            <person name="Hall A."/>
            <person name="Kozma-Bognar L."/>
            <person name="Kim W.Y."/>
            <person name="Eriksson M.E."/>
            <person name="Toth R."/>
            <person name="Hanano S."/>
            <person name="Feher B."/>
            <person name="Southern M.M."/>
            <person name="Bastow R.M."/>
            <person name="Viczian A."/>
            <person name="Hibberd V."/>
            <person name="Davis S.J."/>
            <person name="Somers D.E."/>
            <person name="Nagy F."/>
            <person name="Millar A.J."/>
        </authorList>
    </citation>
    <scope>FUNCTION</scope>
    <scope>MUTAGENESIS OF GLY-119; GLU-203; GLY-287; PRO-317; ASP-320; GLY-347; ASP-372; ASP-425; GLY-452 AND GLY-564</scope>
    <scope>INTERACTION WITH SKP1A; APRR1 AND PHYB</scope>
</reference>
<reference key="15">
    <citation type="journal article" date="2007" name="Nature">
        <title>ZEITLUPE is a circadian photoreceptor stabilized by GIGANTEA in blue light.</title>
        <authorList>
            <person name="Kim W.Y."/>
            <person name="Fujiwara S."/>
            <person name="Suh S.S."/>
            <person name="Kim J."/>
            <person name="Kim Y."/>
            <person name="Han L."/>
            <person name="David K."/>
            <person name="Putterill J."/>
            <person name="Nam H.G."/>
            <person name="Somers D.E."/>
        </authorList>
    </citation>
    <scope>FUNCTION</scope>
    <scope>MUTAGENESIS OF GLY-46; CYS-82; GLY-119; LEU-200; GLU-203; LEU-213; ASP-425 AND GLY-452</scope>
    <scope>INTERACTION WITH GI AND APRR1</scope>
    <scope>INDUCTION</scope>
    <scope>SUBCELLULAR LOCATION</scope>
</reference>
<reference key="16">
    <citation type="journal article" date="2008" name="J. Biol. Chem.">
        <title>Post-translational regulation of the Arabidopsis circadian clock through selective proteolysis and phosphorylation of pseudo-response regulator proteins.</title>
        <authorList>
            <person name="Fujiwara S."/>
            <person name="Wang L."/>
            <person name="Han L."/>
            <person name="Suh S.-S."/>
            <person name="Salome P.A."/>
            <person name="McClung C.R."/>
            <person name="Somers D.E."/>
        </authorList>
    </citation>
    <scope>INTERACTION WITH APRR5</scope>
</reference>
<reference key="17">
    <citation type="journal article" date="2011" name="Plant J.">
        <title>LOV KELCH PROTEIN2 and ZEITLUPE repress Arabidopsis photoperiodic flowering under non-inductive conditions, dependent on FLAVIN-BINDING KELCH REPEAT F-BOX1.</title>
        <authorList>
            <person name="Takase T."/>
            <person name="Nishiyama Y."/>
            <person name="Tanihigashi H."/>
            <person name="Ogura Y."/>
            <person name="Miyazaki Y."/>
            <person name="Yamada Y."/>
            <person name="Kiyosue T."/>
        </authorList>
    </citation>
    <scope>FUNCTION</scope>
    <scope>INTERACTION WITH ADO3</scope>
    <scope>SUBCELLULAR LOCATION</scope>
    <scope>DISRUPTION PHENOTYPE</scope>
</reference>
<reference key="18">
    <citation type="journal article" date="2011" name="Plant Physiol.">
        <title>Partners in time: EARLY BIRD associates with ZEITLUPE and regulates the speed of the Arabidopsis clock.</title>
        <authorList>
            <person name="Johansson M."/>
            <person name="McWatters H.G."/>
            <person name="Bako L."/>
            <person name="Takata N."/>
            <person name="Gyula P."/>
            <person name="Hall A."/>
            <person name="Somers D.E."/>
            <person name="Millar A.J."/>
            <person name="Eriksson M.E."/>
        </authorList>
    </citation>
    <scope>INTERACTION WITH NFXL2</scope>
    <scope>INDUCTION</scope>
</reference>
<gene>
    <name type="primary">ADO1</name>
    <name type="synonym">FKL2</name>
    <name type="synonym">LKP1</name>
    <name type="synonym">ZTL</name>
    <name type="ordered locus">At5g57360</name>
    <name type="ORF">MSF19.2</name>
</gene>
<proteinExistence type="evidence at protein level"/>
<comment type="function">
    <text evidence="5 6 7 8 11 13 14 15 18">Component of an E3 ubiquitin ligase complex that plays a central role in blue light-dependent circadian cycles. Acts as a blue light photoreceptor, due to the presence of FMN, that mediates light-regulated protein degradation of critical clock components by targeting them to the proteasome complex. The SCF(ADO1) E3 ubiquitin ligase complex is involved in the regulation of circadian clock-dependent processes including the transition to flowering time, hypocotyl elongation, cotyledons and leaf movement rhythms. APRR1/TOC1 and APRR5, but not 'GIGANTEA', are proteolytic substrates of this ubiquitin ligase complex. Blue light enhances cooperative stabilization of 'GIGANTEA' and ADO1/ZTL, leading to amplification and sharpening of the expression profile of APRR1/TOC1. ADO1/ZTL interacts with ADO3, preventing the interaction of ADO3 with CDF1.</text>
</comment>
<comment type="pathway">
    <text>Protein modification; protein ubiquitination.</text>
</comment>
<comment type="subunit">
    <text evidence="8 10 12 13 14 15 16 17 18">Interacts with NFXL2. Interacts (via N-terminus) with GI and (via Kelch repeats) with ADO3. Component of an E3 ubiquitin ligase SCF(ADO1) complex composed of SKP1A/ASK1 (or SKP1B/ASK2), CUL1, RBX1 and ADO1. Also interacts with SKP1D/ASK4, SKP1K/ASK11, CRY1, PHYB, APRR1 and APRR5, and probably with SKP1N/ASK14 and SKP1S/ASK19.</text>
</comment>
<comment type="interaction">
    <interactant intactId="EBI-300691">
        <id>Q94BT6</id>
    </interactant>
    <interactant intactId="EBI-618423">
        <id>Q9LKL2</id>
        <label>APRR1</label>
    </interactant>
    <organismsDiffer>false</organismsDiffer>
    <experiments>7</experiments>
</comment>
<comment type="interaction">
    <interactant intactId="EBI-300691">
        <id>Q94BT6</id>
    </interactant>
    <interactant intactId="EBI-401185">
        <id>O49484</id>
        <label>ASK11</label>
    </interactant>
    <organismsDiffer>false</organismsDiffer>
    <experiments>3</experiments>
</comment>
<comment type="interaction">
    <interactant intactId="EBI-300691">
        <id>Q94BT6</id>
    </interactant>
    <interactant intactId="EBI-446380">
        <id>Q9SQI2</id>
        <label>GI</label>
    </interactant>
    <organismsDiffer>false</organismsDiffer>
    <experiments>6</experiments>
</comment>
<comment type="interaction">
    <interactant intactId="EBI-300691">
        <id>Q94BT6</id>
    </interactant>
    <interactant intactId="EBI-532357">
        <id>Q39255</id>
        <label>SKP1A</label>
    </interactant>
    <organismsDiffer>false</organismsDiffer>
    <experiments>9</experiments>
</comment>
<comment type="interaction">
    <interactant intactId="EBI-300691">
        <id>Q94BT6</id>
    </interactant>
    <interactant intactId="EBI-604076">
        <id>Q9FHW7</id>
        <label>SKP1B</label>
    </interactant>
    <organismsDiffer>false</organismsDiffer>
    <experiments>5</experiments>
</comment>
<comment type="subcellular location">
    <subcellularLocation>
        <location>Nucleus</location>
    </subcellularLocation>
    <subcellularLocation>
        <location>Cytoplasm</location>
    </subcellularLocation>
    <text>Nuclear after 9 hours of illumination (afternoon of long days). Cytoplasmic when plant have been subsequently grown 16 hours in light and 5 hours in dark (early morning of long days).</text>
</comment>
<comment type="alternative products">
    <event type="alternative splicing"/>
    <isoform>
        <id>Q94BT6-1</id>
        <name>1</name>
        <sequence type="displayed"/>
    </isoform>
    <text>A number of isoforms are produced. According to EST sequences.</text>
</comment>
<comment type="tissue specificity">
    <text evidence="6 7">Ubiquitously expressed with higher levels in cotyledons and leaves.</text>
</comment>
<comment type="developmental stage">
    <text>Mainly present during the light phase, and degraded in a proteasome-dependent manner in dark (at protein level).</text>
</comment>
<comment type="induction">
    <text evidence="5 7 9 15 17">Not regulated at the transcript level, but circadian-regulation at the protein level with a peak at the end of the subjective day.</text>
</comment>
<comment type="PTM">
    <text>May be ubiquitinated. Degraded in a proteasome-dependent manner.</text>
</comment>
<comment type="PTM">
    <text evidence="1">FMN binds covalently to cysteine after exposure to blue light and is reversed in the dark.</text>
</comment>
<comment type="disruption phenotype">
    <text evidence="18">Accumulation of ADO3 protein during the morning period and early flowering time.</text>
</comment>
<comment type="miscellaneous">
    <text>'Zeitlupe' means slow motion in German.</text>
</comment>
<comment type="miscellaneous">
    <text>'Adagio' means slowly in Italian.</text>
</comment>
<comment type="similarity">
    <text evidence="19">Belongs to the ADAGIO family.</text>
</comment>
<comment type="sequence caution" evidence="19">
    <conflict type="frameshift">
        <sequence resource="EMBL-CDS" id="AAK64006"/>
    </conflict>
</comment>
<evidence type="ECO:0000250" key="1"/>
<evidence type="ECO:0000255" key="2">
    <source>
        <dbReference type="PROSITE-ProRule" id="PRU00080"/>
    </source>
</evidence>
<evidence type="ECO:0000255" key="3">
    <source>
        <dbReference type="PROSITE-ProRule" id="PRU00140"/>
    </source>
</evidence>
<evidence type="ECO:0000256" key="4">
    <source>
        <dbReference type="SAM" id="MobiDB-lite"/>
    </source>
</evidence>
<evidence type="ECO:0000269" key="5">
    <source>
    </source>
</evidence>
<evidence type="ECO:0000269" key="6">
    <source>
    </source>
</evidence>
<evidence type="ECO:0000269" key="7">
    <source>
    </source>
</evidence>
<evidence type="ECO:0000269" key="8">
    <source>
    </source>
</evidence>
<evidence type="ECO:0000269" key="9">
    <source>
    </source>
</evidence>
<evidence type="ECO:0000269" key="10">
    <source>
    </source>
</evidence>
<evidence type="ECO:0000269" key="11">
    <source>
    </source>
</evidence>
<evidence type="ECO:0000269" key="12">
    <source>
    </source>
</evidence>
<evidence type="ECO:0000269" key="13">
    <source>
    </source>
</evidence>
<evidence type="ECO:0000269" key="14">
    <source>
    </source>
</evidence>
<evidence type="ECO:0000269" key="15">
    <source>
    </source>
</evidence>
<evidence type="ECO:0000269" key="16">
    <source>
    </source>
</evidence>
<evidence type="ECO:0000269" key="17">
    <source>
    </source>
</evidence>
<evidence type="ECO:0000269" key="18">
    <source>
    </source>
</evidence>
<evidence type="ECO:0000305" key="19"/>
<evidence type="ECO:0007829" key="20">
    <source>
        <dbReference type="PDB" id="5SVU"/>
    </source>
</evidence>
<evidence type="ECO:0007829" key="21">
    <source>
        <dbReference type="PDB" id="5SVV"/>
    </source>
</evidence>
<evidence type="ECO:0007829" key="22">
    <source>
        <dbReference type="PDB" id="5SVW"/>
    </source>
</evidence>
<dbReference type="EMBL" id="AF254413">
    <property type="protein sequence ID" value="AAF70288.1"/>
    <property type="molecule type" value="mRNA"/>
</dbReference>
<dbReference type="EMBL" id="AF216525">
    <property type="protein sequence ID" value="AAF32300.1"/>
    <property type="molecule type" value="mRNA"/>
</dbReference>
<dbReference type="EMBL" id="AB038796">
    <property type="protein sequence ID" value="BAB18914.1"/>
    <property type="molecule type" value="mRNA"/>
</dbReference>
<dbReference type="EMBL" id="AF252294">
    <property type="protein sequence ID" value="AAK27433.1"/>
    <property type="molecule type" value="mRNA"/>
</dbReference>
<dbReference type="EMBL" id="AB016891">
    <property type="protein sequence ID" value="BAB08473.1"/>
    <property type="molecule type" value="Genomic_DNA"/>
</dbReference>
<dbReference type="EMBL" id="CP002688">
    <property type="protein sequence ID" value="AED96891.1"/>
    <property type="molecule type" value="Genomic_DNA"/>
</dbReference>
<dbReference type="EMBL" id="AY039902">
    <property type="protein sequence ID" value="AAK64006.1"/>
    <property type="status" value="ALT_FRAME"/>
    <property type="molecule type" value="mRNA"/>
</dbReference>
<dbReference type="EMBL" id="BT008772">
    <property type="protein sequence ID" value="AAP68211.1"/>
    <property type="molecule type" value="mRNA"/>
</dbReference>
<dbReference type="RefSeq" id="NP_568855.1">
    <molecule id="Q94BT6-1"/>
    <property type="nucleotide sequence ID" value="NM_125119.4"/>
</dbReference>
<dbReference type="PDB" id="5SVG">
    <property type="method" value="X-ray"/>
    <property type="resolution" value="2.50 A"/>
    <property type="chains" value="A/B/C/D=29-165"/>
</dbReference>
<dbReference type="PDB" id="5SVU">
    <property type="method" value="X-ray"/>
    <property type="resolution" value="2.60 A"/>
    <property type="chains" value="A/B/C/D=29-165"/>
</dbReference>
<dbReference type="PDB" id="5SVV">
    <property type="method" value="X-ray"/>
    <property type="resolution" value="2.10 A"/>
    <property type="chains" value="A/B/C/D=29-165"/>
</dbReference>
<dbReference type="PDB" id="5SVW">
    <property type="method" value="X-ray"/>
    <property type="resolution" value="2.29 A"/>
    <property type="chains" value="A/B/C/D=29-165"/>
</dbReference>
<dbReference type="PDB" id="6WLE">
    <property type="method" value="X-ray"/>
    <property type="resolution" value="3.00 A"/>
    <property type="chains" value="A/B/C/D/E/F/G=1-190"/>
</dbReference>
<dbReference type="PDB" id="6WLP">
    <property type="method" value="X-ray"/>
    <property type="resolution" value="3.00 A"/>
    <property type="chains" value="A/B/C/D/E/F/G=1-190"/>
</dbReference>
<dbReference type="PDBsum" id="5SVG"/>
<dbReference type="PDBsum" id="5SVU"/>
<dbReference type="PDBsum" id="5SVV"/>
<dbReference type="PDBsum" id="5SVW"/>
<dbReference type="PDBsum" id="6WLE"/>
<dbReference type="PDBsum" id="6WLP"/>
<dbReference type="SASBDB" id="Q94BT6"/>
<dbReference type="SMR" id="Q94BT6"/>
<dbReference type="BioGRID" id="21086">
    <property type="interactions" value="26"/>
</dbReference>
<dbReference type="DIP" id="DIP-32989N"/>
<dbReference type="FunCoup" id="Q94BT6">
    <property type="interactions" value="311"/>
</dbReference>
<dbReference type="IntAct" id="Q94BT6">
    <property type="interactions" value="20"/>
</dbReference>
<dbReference type="MINT" id="Q94BT6"/>
<dbReference type="STRING" id="3702.Q94BT6"/>
<dbReference type="PaxDb" id="3702-AT5G57360.2"/>
<dbReference type="EnsemblPlants" id="AT5G57360.1">
    <molecule id="Q94BT6-1"/>
    <property type="protein sequence ID" value="AT5G57360.1"/>
    <property type="gene ID" value="AT5G57360"/>
</dbReference>
<dbReference type="GeneID" id="835842"/>
<dbReference type="Gramene" id="AT5G57360.1">
    <molecule id="Q94BT6-1"/>
    <property type="protein sequence ID" value="AT5G57360.1"/>
    <property type="gene ID" value="AT5G57360"/>
</dbReference>
<dbReference type="KEGG" id="ath:AT5G57360"/>
<dbReference type="Araport" id="AT5G57360"/>
<dbReference type="TAIR" id="AT5G57360">
    <property type="gene designation" value="ZTL"/>
</dbReference>
<dbReference type="eggNOG" id="ENOG502QQR1">
    <property type="taxonomic scope" value="Eukaryota"/>
</dbReference>
<dbReference type="HOGENOM" id="CLU_033494_1_0_1"/>
<dbReference type="InParanoid" id="Q94BT6"/>
<dbReference type="OMA" id="REICGIF"/>
<dbReference type="OrthoDB" id="447251at2759"/>
<dbReference type="PhylomeDB" id="Q94BT6"/>
<dbReference type="UniPathway" id="UPA00143"/>
<dbReference type="PRO" id="PR:Q94BT6"/>
<dbReference type="Proteomes" id="UP000006548">
    <property type="component" value="Chromosome 5"/>
</dbReference>
<dbReference type="ExpressionAtlas" id="Q94BT6">
    <property type="expression patterns" value="baseline and differential"/>
</dbReference>
<dbReference type="GO" id="GO:0005737">
    <property type="term" value="C:cytoplasm"/>
    <property type="evidence" value="ECO:0007669"/>
    <property type="project" value="UniProtKB-SubCell"/>
</dbReference>
<dbReference type="GO" id="GO:0005634">
    <property type="term" value="C:nucleus"/>
    <property type="evidence" value="ECO:0007669"/>
    <property type="project" value="UniProtKB-SubCell"/>
</dbReference>
<dbReference type="GO" id="GO:0009881">
    <property type="term" value="F:photoreceptor activity"/>
    <property type="evidence" value="ECO:0007669"/>
    <property type="project" value="UniProtKB-KW"/>
</dbReference>
<dbReference type="GO" id="GO:0009908">
    <property type="term" value="P:flower development"/>
    <property type="evidence" value="ECO:0007669"/>
    <property type="project" value="UniProtKB-KW"/>
</dbReference>
<dbReference type="GO" id="GO:0016567">
    <property type="term" value="P:protein ubiquitination"/>
    <property type="evidence" value="ECO:0007669"/>
    <property type="project" value="UniProtKB-UniPathway"/>
</dbReference>
<dbReference type="GO" id="GO:0048511">
    <property type="term" value="P:rhythmic process"/>
    <property type="evidence" value="ECO:0007669"/>
    <property type="project" value="UniProtKB-KW"/>
</dbReference>
<dbReference type="CDD" id="cd22154">
    <property type="entry name" value="F-box_AtADO-like"/>
    <property type="match status" value="1"/>
</dbReference>
<dbReference type="CDD" id="cd00130">
    <property type="entry name" value="PAS"/>
    <property type="match status" value="1"/>
</dbReference>
<dbReference type="FunFam" id="1.20.1280.50:FF:000021">
    <property type="entry name" value="Adagio protein 1"/>
    <property type="match status" value="1"/>
</dbReference>
<dbReference type="FunFam" id="3.30.450.20:FF:000041">
    <property type="entry name" value="Adagio protein 1"/>
    <property type="match status" value="1"/>
</dbReference>
<dbReference type="FunFam" id="2.120.10.80:FF:000005">
    <property type="entry name" value="Putative LOV domain-containing protein"/>
    <property type="match status" value="1"/>
</dbReference>
<dbReference type="FunFam" id="2.120.10.80:FF:000062">
    <property type="entry name" value="Putative LOV domain-containing protein"/>
    <property type="match status" value="1"/>
</dbReference>
<dbReference type="Gene3D" id="1.20.1280.50">
    <property type="match status" value="1"/>
</dbReference>
<dbReference type="Gene3D" id="2.120.10.80">
    <property type="entry name" value="Kelch-type beta propeller"/>
    <property type="match status" value="2"/>
</dbReference>
<dbReference type="Gene3D" id="3.30.450.20">
    <property type="entry name" value="PAS domain"/>
    <property type="match status" value="1"/>
</dbReference>
<dbReference type="InterPro" id="IPR036047">
    <property type="entry name" value="F-box-like_dom_sf"/>
</dbReference>
<dbReference type="InterPro" id="IPR001810">
    <property type="entry name" value="F-box_dom"/>
</dbReference>
<dbReference type="InterPro" id="IPR011043">
    <property type="entry name" value="Gal_Oxase/kelch_b-propeller"/>
</dbReference>
<dbReference type="InterPro" id="IPR015915">
    <property type="entry name" value="Kelch-typ_b-propeller"/>
</dbReference>
<dbReference type="InterPro" id="IPR011498">
    <property type="entry name" value="Kelch_2"/>
</dbReference>
<dbReference type="InterPro" id="IPR000014">
    <property type="entry name" value="PAS"/>
</dbReference>
<dbReference type="InterPro" id="IPR035965">
    <property type="entry name" value="PAS-like_dom_sf"/>
</dbReference>
<dbReference type="NCBIfam" id="TIGR00229">
    <property type="entry name" value="sensory_box"/>
    <property type="match status" value="1"/>
</dbReference>
<dbReference type="PANTHER" id="PTHR46175:SF5">
    <property type="entry name" value="ADAGIO PROTEIN 1"/>
    <property type="match status" value="1"/>
</dbReference>
<dbReference type="PANTHER" id="PTHR46175">
    <property type="entry name" value="BACTERIOOPSIN TRANSCRIPTIONAL ACTIVATOR"/>
    <property type="match status" value="1"/>
</dbReference>
<dbReference type="Pfam" id="PF12937">
    <property type="entry name" value="F-box-like"/>
    <property type="match status" value="1"/>
</dbReference>
<dbReference type="Pfam" id="PF07646">
    <property type="entry name" value="Kelch_2"/>
    <property type="match status" value="1"/>
</dbReference>
<dbReference type="Pfam" id="PF24681">
    <property type="entry name" value="Kelch_KLHDC2_KLHL20_DRC7"/>
    <property type="match status" value="1"/>
</dbReference>
<dbReference type="Pfam" id="PF13426">
    <property type="entry name" value="PAS_9"/>
    <property type="match status" value="1"/>
</dbReference>
<dbReference type="SMART" id="SM00256">
    <property type="entry name" value="FBOX"/>
    <property type="match status" value="1"/>
</dbReference>
<dbReference type="SUPFAM" id="SSF81383">
    <property type="entry name" value="F-box domain"/>
    <property type="match status" value="1"/>
</dbReference>
<dbReference type="SUPFAM" id="SSF50965">
    <property type="entry name" value="Galactose oxidase, central domain"/>
    <property type="match status" value="1"/>
</dbReference>
<dbReference type="SUPFAM" id="SSF117281">
    <property type="entry name" value="Kelch motif"/>
    <property type="match status" value="1"/>
</dbReference>
<dbReference type="SUPFAM" id="SSF55785">
    <property type="entry name" value="PYP-like sensor domain (PAS domain)"/>
    <property type="match status" value="1"/>
</dbReference>
<dbReference type="PROSITE" id="PS50181">
    <property type="entry name" value="FBOX"/>
    <property type="match status" value="1"/>
</dbReference>
<dbReference type="PROSITE" id="PS50112">
    <property type="entry name" value="PAS"/>
    <property type="match status" value="1"/>
</dbReference>
<organism>
    <name type="scientific">Arabidopsis thaliana</name>
    <name type="common">Mouse-ear cress</name>
    <dbReference type="NCBI Taxonomy" id="3702"/>
    <lineage>
        <taxon>Eukaryota</taxon>
        <taxon>Viridiplantae</taxon>
        <taxon>Streptophyta</taxon>
        <taxon>Embryophyta</taxon>
        <taxon>Tracheophyta</taxon>
        <taxon>Spermatophyta</taxon>
        <taxon>Magnoliopsida</taxon>
        <taxon>eudicotyledons</taxon>
        <taxon>Gunneridae</taxon>
        <taxon>Pentapetalae</taxon>
        <taxon>rosids</taxon>
        <taxon>malvids</taxon>
        <taxon>Brassicales</taxon>
        <taxon>Brassicaceae</taxon>
        <taxon>Camelineae</taxon>
        <taxon>Arabidopsis</taxon>
    </lineage>
</organism>
<feature type="chain" id="PRO_0000119956" description="Adagio protein 1">
    <location>
        <begin position="1"/>
        <end position="609"/>
    </location>
</feature>
<feature type="domain" description="PAS" evidence="3">
    <location>
        <begin position="32"/>
        <end position="114"/>
    </location>
</feature>
<feature type="domain" description="PAC">
    <location>
        <begin position="118"/>
        <end position="161"/>
    </location>
</feature>
<feature type="domain" description="F-box" evidence="2">
    <location>
        <begin position="195"/>
        <end position="241"/>
    </location>
</feature>
<feature type="repeat" description="Kelch 1">
    <location>
        <begin position="292"/>
        <end position="342"/>
    </location>
</feature>
<feature type="repeat" description="Kelch 2">
    <location>
        <begin position="345"/>
        <end position="392"/>
    </location>
</feature>
<feature type="repeat" description="Kelch 3">
    <location>
        <begin position="397"/>
        <end position="445"/>
    </location>
</feature>
<feature type="repeat" description="Kelch 4">
    <location>
        <begin position="450"/>
        <end position="501"/>
    </location>
</feature>
<feature type="repeat" description="Kelch 5">
    <location>
        <begin position="516"/>
        <end position="564"/>
    </location>
</feature>
<feature type="region of interest" description="Disordered" evidence="4">
    <location>
        <begin position="1"/>
        <end position="24"/>
    </location>
</feature>
<feature type="compositionally biased region" description="Low complexity" evidence="4">
    <location>
        <begin position="1"/>
        <end position="17"/>
    </location>
</feature>
<feature type="modified residue" description="S-4a-FMN cysteine" evidence="1">
    <location>
        <position position="82"/>
    </location>
</feature>
<feature type="mutagenesis site" description="Loss of binding to GI." evidence="15">
    <original>G</original>
    <variation>E</variation>
    <location>
        <position position="46"/>
    </location>
</feature>
<feature type="mutagenesis site" description="Loss of binding to GI, but no effect on FNM binding." evidence="15">
    <original>C</original>
    <variation>A</variation>
    <location>
        <position position="82"/>
    </location>
</feature>
<feature type="mutagenesis site" description="In ztl-21; long-period phenotype, decreased interaction with SKP1A/ASK1 and loss of binding to GI, NFXL2 and APRR1/TOC1, but no effect on binding to PHYB." evidence="14 15">
    <original>G</original>
    <variation>D</variation>
    <location>
        <position position="119"/>
    </location>
</feature>
<feature type="mutagenesis site" description="No SCF(ADO1) complex formation and reduced cyclic degradation of ADO1, but no effect on binding to GI; when associated with A-213." evidence="13 15">
    <original>L</original>
    <variation>A</variation>
    <location>
        <position position="200"/>
    </location>
</feature>
<feature type="mutagenesis site" description="In ztl-22; long-period phenotype and loss of binding to NFXL2, but no effect on binding to GI or PHYB." evidence="14 15">
    <original>E</original>
    <variation>K</variation>
    <location>
        <position position="203"/>
    </location>
</feature>
<feature type="mutagenesis site" description="No SCF(ADO1) complex formation and reduced cyclic degradation of ADO1, but no effect on binding to GI; when associated with A-200." evidence="13 15">
    <original>L</original>
    <variation>A</variation>
    <location>
        <position position="213"/>
    </location>
</feature>
<feature type="mutagenesis site" description="In ztl-23; long-period phenotype, but no effect on binding to PHYB." evidence="14">
    <original>G</original>
    <variation>D</variation>
    <location>
        <position position="287"/>
    </location>
</feature>
<feature type="mutagenesis site" description="In ztl-24; long-period phenotype, but no effect on binding to PHYB." evidence="14">
    <original>P</original>
    <variation>S</variation>
    <location>
        <position position="317"/>
    </location>
</feature>
<feature type="mutagenesis site" description="In ztl-2; affects circadian clock by lengthening the free-running period of clock-controlled processes." evidence="5 14">
    <original>D</original>
    <variation>N</variation>
    <location>
        <position position="320"/>
    </location>
</feature>
<feature type="mutagenesis site" description="In ztl-25; long-period phenotype, but no effect on binding to PHYB." evidence="14">
    <original>G</original>
    <variation>S</variation>
    <location>
        <position position="347"/>
    </location>
</feature>
<feature type="mutagenesis site" description="In ztl-26; long-period phenotype, but no effect on binding to PHYB." evidence="14">
    <original>D</original>
    <variation>N</variation>
    <location>
        <position position="372"/>
    </location>
</feature>
<feature type="mutagenesis site" description="In ztl-1; affects circadian clock by lengthening the free-running period of clock-controlled processes, but has no effect on binding to GI or NFXL2." evidence="5 14 15">
    <original>D</original>
    <variation>N</variation>
    <location>
        <position position="425"/>
    </location>
</feature>
<feature type="mutagenesis site" description="In ztl-27; long-period phenotype and loss of binding to APRR1/TOC1, but no effect on binding to GI or PHYB." evidence="14 15">
    <original>G</original>
    <variation>D</variation>
    <location>
        <position position="452"/>
    </location>
</feature>
<feature type="mutagenesis site" description="In ztl-30; long-period phenotype, but no effect on binding to PHYB." evidence="14">
    <original>G</original>
    <variation>R</variation>
    <location>
        <position position="564"/>
    </location>
</feature>
<feature type="turn" evidence="20">
    <location>
        <begin position="36"/>
        <end position="39"/>
    </location>
</feature>
<feature type="helix" evidence="22">
    <location>
        <begin position="40"/>
        <end position="42"/>
    </location>
</feature>
<feature type="strand" evidence="21">
    <location>
        <begin position="46"/>
        <end position="54"/>
    </location>
</feature>
<feature type="strand" evidence="21">
    <location>
        <begin position="59"/>
        <end position="62"/>
    </location>
</feature>
<feature type="helix" evidence="21">
    <location>
        <begin position="64"/>
        <end position="70"/>
    </location>
</feature>
<feature type="helix" evidence="21">
    <location>
        <begin position="74"/>
        <end position="76"/>
    </location>
</feature>
<feature type="turn" evidence="21">
    <location>
        <begin position="77"/>
        <end position="79"/>
    </location>
</feature>
<feature type="helix" evidence="21">
    <location>
        <begin position="82"/>
        <end position="86"/>
    </location>
</feature>
<feature type="strand" evidence="21">
    <location>
        <begin position="87"/>
        <end position="89"/>
    </location>
</feature>
<feature type="helix" evidence="21">
    <location>
        <begin position="101"/>
        <end position="112"/>
    </location>
</feature>
<feature type="strand" evidence="21">
    <location>
        <begin position="117"/>
        <end position="124"/>
    </location>
</feature>
<feature type="strand" evidence="21">
    <location>
        <begin position="130"/>
        <end position="141"/>
    </location>
</feature>
<feature type="strand" evidence="21">
    <location>
        <begin position="143"/>
        <end position="145"/>
    </location>
</feature>
<feature type="strand" evidence="21">
    <location>
        <begin position="147"/>
        <end position="158"/>
    </location>
</feature>
<protein>
    <recommendedName>
        <fullName>Adagio protein 1</fullName>
    </recommendedName>
    <alternativeName>
        <fullName>Clock-associated PAS protein ZTL</fullName>
    </alternativeName>
    <alternativeName>
        <fullName>F-box only protein 2b</fullName>
        <shortName>FBX2b</shortName>
    </alternativeName>
    <alternativeName>
        <fullName>Flavin-binding kelch repeat F-box protein 1-like protein 2</fullName>
        <shortName>FKF1-like protein 2</shortName>
    </alternativeName>
    <alternativeName>
        <fullName>LOV kelch protein 1</fullName>
    </alternativeName>
    <alternativeName>
        <fullName>Protein ZEITLUPE</fullName>
    </alternativeName>
</protein>
<keyword id="KW-0002">3D-structure</keyword>
<keyword id="KW-0025">Alternative splicing</keyword>
<keyword id="KW-0090">Biological rhythms</keyword>
<keyword id="KW-0157">Chromophore</keyword>
<keyword id="KW-0963">Cytoplasm</keyword>
<keyword id="KW-0285">Flavoprotein</keyword>
<keyword id="KW-0287">Flowering</keyword>
<keyword id="KW-0288">FMN</keyword>
<keyword id="KW-0880">Kelch repeat</keyword>
<keyword id="KW-0539">Nucleus</keyword>
<keyword id="KW-0600">Photoreceptor protein</keyword>
<keyword id="KW-0675">Receptor</keyword>
<keyword id="KW-1185">Reference proteome</keyword>
<keyword id="KW-0677">Repeat</keyword>
<keyword id="KW-0716">Sensory transduction</keyword>
<keyword id="KW-0832">Ubl conjugation</keyword>
<keyword id="KW-0833">Ubl conjugation pathway</keyword>